<evidence type="ECO:0000255" key="1">
    <source>
        <dbReference type="HAMAP-Rule" id="MF_00651"/>
    </source>
</evidence>
<gene>
    <name evidence="1" type="primary">yqgF</name>
    <name type="ordered locus">ECS88_3231</name>
</gene>
<dbReference type="EC" id="3.1.-.-" evidence="1"/>
<dbReference type="EMBL" id="CU928161">
    <property type="protein sequence ID" value="CAR04466.1"/>
    <property type="molecule type" value="Genomic_DNA"/>
</dbReference>
<dbReference type="SMR" id="B7MMD7"/>
<dbReference type="KEGG" id="ecz:ECS88_3231"/>
<dbReference type="HOGENOM" id="CLU_098240_3_0_6"/>
<dbReference type="Proteomes" id="UP000000747">
    <property type="component" value="Chromosome"/>
</dbReference>
<dbReference type="GO" id="GO:0005829">
    <property type="term" value="C:cytosol"/>
    <property type="evidence" value="ECO:0007669"/>
    <property type="project" value="TreeGrafter"/>
</dbReference>
<dbReference type="GO" id="GO:0004518">
    <property type="term" value="F:nuclease activity"/>
    <property type="evidence" value="ECO:0007669"/>
    <property type="project" value="UniProtKB-KW"/>
</dbReference>
<dbReference type="GO" id="GO:0000967">
    <property type="term" value="P:rRNA 5'-end processing"/>
    <property type="evidence" value="ECO:0007669"/>
    <property type="project" value="UniProtKB-UniRule"/>
</dbReference>
<dbReference type="CDD" id="cd16964">
    <property type="entry name" value="YqgF"/>
    <property type="match status" value="1"/>
</dbReference>
<dbReference type="FunFam" id="3.30.420.140:FF:000002">
    <property type="entry name" value="Putative pre-16S rRNA nuclease"/>
    <property type="match status" value="1"/>
</dbReference>
<dbReference type="Gene3D" id="3.30.420.140">
    <property type="entry name" value="YqgF/RNase H-like domain"/>
    <property type="match status" value="1"/>
</dbReference>
<dbReference type="HAMAP" id="MF_00651">
    <property type="entry name" value="Nuclease_YqgF"/>
    <property type="match status" value="1"/>
</dbReference>
<dbReference type="InterPro" id="IPR012337">
    <property type="entry name" value="RNaseH-like_sf"/>
</dbReference>
<dbReference type="InterPro" id="IPR005227">
    <property type="entry name" value="YqgF"/>
</dbReference>
<dbReference type="InterPro" id="IPR006641">
    <property type="entry name" value="YqgF/RNaseH-like_dom"/>
</dbReference>
<dbReference type="InterPro" id="IPR037027">
    <property type="entry name" value="YqgF/RNaseH-like_dom_sf"/>
</dbReference>
<dbReference type="NCBIfam" id="TIGR00250">
    <property type="entry name" value="RNAse_H_YqgF"/>
    <property type="match status" value="1"/>
</dbReference>
<dbReference type="PANTHER" id="PTHR33317">
    <property type="entry name" value="POLYNUCLEOTIDYL TRANSFERASE, RIBONUCLEASE H-LIKE SUPERFAMILY PROTEIN"/>
    <property type="match status" value="1"/>
</dbReference>
<dbReference type="PANTHER" id="PTHR33317:SF4">
    <property type="entry name" value="POLYNUCLEOTIDYL TRANSFERASE, RIBONUCLEASE H-LIKE SUPERFAMILY PROTEIN"/>
    <property type="match status" value="1"/>
</dbReference>
<dbReference type="Pfam" id="PF03652">
    <property type="entry name" value="RuvX"/>
    <property type="match status" value="1"/>
</dbReference>
<dbReference type="SMART" id="SM00732">
    <property type="entry name" value="YqgFc"/>
    <property type="match status" value="1"/>
</dbReference>
<dbReference type="SUPFAM" id="SSF53098">
    <property type="entry name" value="Ribonuclease H-like"/>
    <property type="match status" value="1"/>
</dbReference>
<comment type="function">
    <text evidence="1">Could be a nuclease involved in processing of the 5'-end of pre-16S rRNA.</text>
</comment>
<comment type="subcellular location">
    <subcellularLocation>
        <location evidence="1">Cytoplasm</location>
    </subcellularLocation>
</comment>
<comment type="similarity">
    <text evidence="1">Belongs to the YqgF nuclease family.</text>
</comment>
<reference key="1">
    <citation type="journal article" date="2009" name="PLoS Genet.">
        <title>Organised genome dynamics in the Escherichia coli species results in highly diverse adaptive paths.</title>
        <authorList>
            <person name="Touchon M."/>
            <person name="Hoede C."/>
            <person name="Tenaillon O."/>
            <person name="Barbe V."/>
            <person name="Baeriswyl S."/>
            <person name="Bidet P."/>
            <person name="Bingen E."/>
            <person name="Bonacorsi S."/>
            <person name="Bouchier C."/>
            <person name="Bouvet O."/>
            <person name="Calteau A."/>
            <person name="Chiapello H."/>
            <person name="Clermont O."/>
            <person name="Cruveiller S."/>
            <person name="Danchin A."/>
            <person name="Diard M."/>
            <person name="Dossat C."/>
            <person name="Karoui M.E."/>
            <person name="Frapy E."/>
            <person name="Garry L."/>
            <person name="Ghigo J.M."/>
            <person name="Gilles A.M."/>
            <person name="Johnson J."/>
            <person name="Le Bouguenec C."/>
            <person name="Lescat M."/>
            <person name="Mangenot S."/>
            <person name="Martinez-Jehanne V."/>
            <person name="Matic I."/>
            <person name="Nassif X."/>
            <person name="Oztas S."/>
            <person name="Petit M.A."/>
            <person name="Pichon C."/>
            <person name="Rouy Z."/>
            <person name="Ruf C.S."/>
            <person name="Schneider D."/>
            <person name="Tourret J."/>
            <person name="Vacherie B."/>
            <person name="Vallenet D."/>
            <person name="Medigue C."/>
            <person name="Rocha E.P.C."/>
            <person name="Denamur E."/>
        </authorList>
    </citation>
    <scope>NUCLEOTIDE SEQUENCE [LARGE SCALE GENOMIC DNA]</scope>
    <source>
        <strain>S88 / ExPEC</strain>
    </source>
</reference>
<feature type="chain" id="PRO_1000131027" description="Putative pre-16S rRNA nuclease">
    <location>
        <begin position="1"/>
        <end position="138"/>
    </location>
</feature>
<organism>
    <name type="scientific">Escherichia coli O45:K1 (strain S88 / ExPEC)</name>
    <dbReference type="NCBI Taxonomy" id="585035"/>
    <lineage>
        <taxon>Bacteria</taxon>
        <taxon>Pseudomonadati</taxon>
        <taxon>Pseudomonadota</taxon>
        <taxon>Gammaproteobacteria</taxon>
        <taxon>Enterobacterales</taxon>
        <taxon>Enterobacteriaceae</taxon>
        <taxon>Escherichia</taxon>
    </lineage>
</organism>
<keyword id="KW-0963">Cytoplasm</keyword>
<keyword id="KW-0378">Hydrolase</keyword>
<keyword id="KW-0540">Nuclease</keyword>
<keyword id="KW-1185">Reference proteome</keyword>
<keyword id="KW-0690">Ribosome biogenesis</keyword>
<name>YQGF_ECO45</name>
<accession>B7MMD7</accession>
<proteinExistence type="inferred from homology"/>
<sequence>MSGTLLAFDFGTKSIGVAVGQRITGTARPLPAIKAQDGTPDWNIIERLLKEWQPDEIIVGLPLNMDGTEQPLTARARKFANRIHGRFGVEVKLHDERLSTVEARSGLFEQGGYRALNKGKVDSASAVIILESYFEQGY</sequence>
<protein>
    <recommendedName>
        <fullName evidence="1">Putative pre-16S rRNA nuclease</fullName>
        <ecNumber evidence="1">3.1.-.-</ecNumber>
    </recommendedName>
</protein>